<sequence length="240" mass="25705">MKMMDANEIISFIQKSEKKTPVKVYIKGDLKEVTFPETVQAFVNKKSGVLFGEWSEIKTILDENNKHIVDYVVENDRRNSAIPMLDLKGIKARIEPGAIIRDHVEIGDNAVIMMNATINIGAVIGEGSMIDMNAVLGGRATVGKNCHVGAGAVLAGVIEPPSAKPVIVEDDVVIGANVVVLEGVTVGKGAVVAAGAVVTEDVPPYTVVAGTPARVIKEIDEKTKAKTEIKQELRQLNPEK</sequence>
<feature type="chain" id="PRO_0000376629" description="2,3,4,5-tetrahydropyridine-2,6-dicarboxylate N-acetyltransferase">
    <location>
        <begin position="1"/>
        <end position="240"/>
    </location>
</feature>
<name>DAPH_BACCR</name>
<organism>
    <name type="scientific">Bacillus cereus (strain ATCC 14579 / DSM 31 / CCUG 7414 / JCM 2152 / NBRC 15305 / NCIMB 9373 / NCTC 2599 / NRRL B-3711)</name>
    <dbReference type="NCBI Taxonomy" id="226900"/>
    <lineage>
        <taxon>Bacteria</taxon>
        <taxon>Bacillati</taxon>
        <taxon>Bacillota</taxon>
        <taxon>Bacilli</taxon>
        <taxon>Bacillales</taxon>
        <taxon>Bacillaceae</taxon>
        <taxon>Bacillus</taxon>
        <taxon>Bacillus cereus group</taxon>
    </lineage>
</organism>
<dbReference type="EC" id="2.3.1.89" evidence="1"/>
<dbReference type="EMBL" id="AE016877">
    <property type="protein sequence ID" value="AAP10901.1"/>
    <property type="molecule type" value="Genomic_DNA"/>
</dbReference>
<dbReference type="RefSeq" id="NP_833700.1">
    <property type="nucleotide sequence ID" value="NC_004722.1"/>
</dbReference>
<dbReference type="SMR" id="Q819J5"/>
<dbReference type="STRING" id="226900.BC_3981"/>
<dbReference type="MetOSite" id="Q819J5"/>
<dbReference type="KEGG" id="bce:BC3981"/>
<dbReference type="PATRIC" id="fig|226900.8.peg.4107"/>
<dbReference type="HOGENOM" id="CLU_103751_0_0_9"/>
<dbReference type="OrthoDB" id="9788080at2"/>
<dbReference type="UniPathway" id="UPA00034">
    <property type="reaction ID" value="UER00022"/>
</dbReference>
<dbReference type="Proteomes" id="UP000001417">
    <property type="component" value="Chromosome"/>
</dbReference>
<dbReference type="GO" id="GO:0047200">
    <property type="term" value="F:tetrahydrodipicolinate N-acetyltransferase activity"/>
    <property type="evidence" value="ECO:0007669"/>
    <property type="project" value="UniProtKB-EC"/>
</dbReference>
<dbReference type="GO" id="GO:0019877">
    <property type="term" value="P:diaminopimelate biosynthetic process"/>
    <property type="evidence" value="ECO:0007669"/>
    <property type="project" value="UniProtKB-UniRule"/>
</dbReference>
<dbReference type="GO" id="GO:0009089">
    <property type="term" value="P:lysine biosynthetic process via diaminopimelate"/>
    <property type="evidence" value="ECO:0007669"/>
    <property type="project" value="UniProtKB-UniRule"/>
</dbReference>
<dbReference type="CDD" id="cd03350">
    <property type="entry name" value="LbH_THP_succinylT"/>
    <property type="match status" value="1"/>
</dbReference>
<dbReference type="Gene3D" id="2.160.10.10">
    <property type="entry name" value="Hexapeptide repeat proteins"/>
    <property type="match status" value="1"/>
</dbReference>
<dbReference type="Gene3D" id="3.30.70.250">
    <property type="entry name" value="Malonyl-CoA ACP transacylase, ACP-binding"/>
    <property type="match status" value="1"/>
</dbReference>
<dbReference type="HAMAP" id="MF_01691">
    <property type="entry name" value="DapH"/>
    <property type="match status" value="1"/>
</dbReference>
<dbReference type="InterPro" id="IPR019873">
    <property type="entry name" value="DapH"/>
</dbReference>
<dbReference type="InterPro" id="IPR013710">
    <property type="entry name" value="DapH_N"/>
</dbReference>
<dbReference type="InterPro" id="IPR001451">
    <property type="entry name" value="Hexapep"/>
</dbReference>
<dbReference type="InterPro" id="IPR018357">
    <property type="entry name" value="Hexapep_transf_CS"/>
</dbReference>
<dbReference type="InterPro" id="IPR050179">
    <property type="entry name" value="Trans_hexapeptide_repeat"/>
</dbReference>
<dbReference type="InterPro" id="IPR011004">
    <property type="entry name" value="Trimer_LpxA-like_sf"/>
</dbReference>
<dbReference type="NCBIfam" id="TIGR03532">
    <property type="entry name" value="DapD_Ac"/>
    <property type="match status" value="1"/>
</dbReference>
<dbReference type="PANTHER" id="PTHR43300:SF10">
    <property type="entry name" value="2,3,4,5-TETRAHYDROPYRIDINE-2,6-DICARBOXYLATE N-ACETYLTRANSFERASE"/>
    <property type="match status" value="1"/>
</dbReference>
<dbReference type="PANTHER" id="PTHR43300">
    <property type="entry name" value="ACETYLTRANSFERASE"/>
    <property type="match status" value="1"/>
</dbReference>
<dbReference type="Pfam" id="PF08503">
    <property type="entry name" value="DapH_N"/>
    <property type="match status" value="1"/>
</dbReference>
<dbReference type="Pfam" id="PF00132">
    <property type="entry name" value="Hexapep"/>
    <property type="match status" value="1"/>
</dbReference>
<dbReference type="Pfam" id="PF14602">
    <property type="entry name" value="Hexapep_2"/>
    <property type="match status" value="1"/>
</dbReference>
<dbReference type="SUPFAM" id="SSF51161">
    <property type="entry name" value="Trimeric LpxA-like enzymes"/>
    <property type="match status" value="1"/>
</dbReference>
<dbReference type="PROSITE" id="PS00101">
    <property type="entry name" value="HEXAPEP_TRANSFERASES"/>
    <property type="match status" value="1"/>
</dbReference>
<gene>
    <name evidence="1" type="primary">dapH</name>
    <name type="ordered locus">BC_3981</name>
</gene>
<proteinExistence type="inferred from homology"/>
<keyword id="KW-0012">Acyltransferase</keyword>
<keyword id="KW-0028">Amino-acid biosynthesis</keyword>
<keyword id="KW-0220">Diaminopimelate biosynthesis</keyword>
<keyword id="KW-0457">Lysine biosynthesis</keyword>
<keyword id="KW-1185">Reference proteome</keyword>
<keyword id="KW-0677">Repeat</keyword>
<keyword id="KW-0808">Transferase</keyword>
<reference key="1">
    <citation type="journal article" date="2003" name="Nature">
        <title>Genome sequence of Bacillus cereus and comparative analysis with Bacillus anthracis.</title>
        <authorList>
            <person name="Ivanova N."/>
            <person name="Sorokin A."/>
            <person name="Anderson I."/>
            <person name="Galleron N."/>
            <person name="Candelon B."/>
            <person name="Kapatral V."/>
            <person name="Bhattacharyya A."/>
            <person name="Reznik G."/>
            <person name="Mikhailova N."/>
            <person name="Lapidus A."/>
            <person name="Chu L."/>
            <person name="Mazur M."/>
            <person name="Goltsman E."/>
            <person name="Larsen N."/>
            <person name="D'Souza M."/>
            <person name="Walunas T."/>
            <person name="Grechkin Y."/>
            <person name="Pusch G."/>
            <person name="Haselkorn R."/>
            <person name="Fonstein M."/>
            <person name="Ehrlich S.D."/>
            <person name="Overbeek R."/>
            <person name="Kyrpides N.C."/>
        </authorList>
    </citation>
    <scope>NUCLEOTIDE SEQUENCE [LARGE SCALE GENOMIC DNA]</scope>
    <source>
        <strain>ATCC 14579 / DSM 31 / CCUG 7414 / JCM 2152 / NBRC 15305 / NCIMB 9373 / NCTC 2599 / NRRL B-3711</strain>
    </source>
</reference>
<protein>
    <recommendedName>
        <fullName evidence="1">2,3,4,5-tetrahydropyridine-2,6-dicarboxylate N-acetyltransferase</fullName>
        <ecNumber evidence="1">2.3.1.89</ecNumber>
    </recommendedName>
    <alternativeName>
        <fullName evidence="1">Tetrahydrodipicolinate N-acetyltransferase</fullName>
        <shortName evidence="1">THP acetyltransferase</shortName>
        <shortName evidence="1">Tetrahydropicolinate acetylase</shortName>
    </alternativeName>
</protein>
<evidence type="ECO:0000255" key="1">
    <source>
        <dbReference type="HAMAP-Rule" id="MF_01691"/>
    </source>
</evidence>
<comment type="function">
    <text evidence="1">Catalyzes the transfer of an acetyl group from acetyl-CoA to tetrahydrodipicolinate.</text>
</comment>
<comment type="catalytic activity">
    <reaction evidence="1">
        <text>(S)-2,3,4,5-tetrahydrodipicolinate + acetyl-CoA + H2O = L-2-acetamido-6-oxoheptanedioate + CoA</text>
        <dbReference type="Rhea" id="RHEA:13085"/>
        <dbReference type="ChEBI" id="CHEBI:15377"/>
        <dbReference type="ChEBI" id="CHEBI:16845"/>
        <dbReference type="ChEBI" id="CHEBI:57287"/>
        <dbReference type="ChEBI" id="CHEBI:57288"/>
        <dbReference type="ChEBI" id="CHEBI:58117"/>
        <dbReference type="EC" id="2.3.1.89"/>
    </reaction>
</comment>
<comment type="pathway">
    <text evidence="1">Amino-acid biosynthesis; L-lysine biosynthesis via DAP pathway; LL-2,6-diaminopimelate from (S)-tetrahydrodipicolinate (acetylase route): step 1/3.</text>
</comment>
<comment type="similarity">
    <text evidence="1">Belongs to the transferase hexapeptide repeat family. DapH subfamily.</text>
</comment>
<accession>Q819J5</accession>